<protein>
    <recommendedName>
        <fullName>Sister chromatid cohesion 1 protein 3</fullName>
    </recommendedName>
    <alternativeName>
        <fullName>SCC1 homolog 3</fullName>
        <shortName>AtRAD21-2</shortName>
    </alternativeName>
</protein>
<proteinExistence type="evidence at transcript level"/>
<organism>
    <name type="scientific">Arabidopsis thaliana</name>
    <name type="common">Mouse-ear cress</name>
    <dbReference type="NCBI Taxonomy" id="3702"/>
    <lineage>
        <taxon>Eukaryota</taxon>
        <taxon>Viridiplantae</taxon>
        <taxon>Streptophyta</taxon>
        <taxon>Embryophyta</taxon>
        <taxon>Tracheophyta</taxon>
        <taxon>Spermatophyta</taxon>
        <taxon>Magnoliopsida</taxon>
        <taxon>eudicotyledons</taxon>
        <taxon>Gunneridae</taxon>
        <taxon>Pentapetalae</taxon>
        <taxon>rosids</taxon>
        <taxon>malvids</taxon>
        <taxon>Brassicales</taxon>
        <taxon>Brassicaceae</taxon>
        <taxon>Camelineae</taxon>
        <taxon>Arabidopsis</taxon>
    </lineage>
</organism>
<keyword id="KW-0025">Alternative splicing</keyword>
<keyword id="KW-0131">Cell cycle</keyword>
<keyword id="KW-0132">Cell division</keyword>
<keyword id="KW-0159">Chromosome partition</keyword>
<keyword id="KW-0498">Mitosis</keyword>
<keyword id="KW-0539">Nucleus</keyword>
<keyword id="KW-1185">Reference proteome</keyword>
<evidence type="ECO:0000250" key="1"/>
<evidence type="ECO:0000256" key="2">
    <source>
        <dbReference type="SAM" id="MobiDB-lite"/>
    </source>
</evidence>
<evidence type="ECO:0000305" key="3"/>
<sequence>MFYSHTLLARKGPLGTVWCAAHVHQRLKKSQYTSINIPDTVDNIMFPEVPLALRTSSHLLVGVVRIYSKKVDYLYNDWNLLNTWVAKAFVSTQVNLPEDARQAPPESVTLPQALNLDEFDLEDDTLDMEFDNHTRSEEDITLTDQIPTGIDPYVAVTFDEDIISESIPMDVDQSTEPVSRHTGEIDVETAHETGPDNEPRDSNIAFDTGTYSPRNVTEEFTEVQDPRQSNLTEERIPNSERNDATSPGTVPEIERMRDAAHDLSPTSHPSFAAQQQDVRVERTESLDETLNEKEPTIPSIDEEMLNSGRHSAFELRSGSPGSAAGSEEERADFVHPSPQLVLQPSPPPQPQRRARKRKNFDGVTVLTNKNISERLKDPSDTLRKRKKMPSSKLKFWRMNNQSRKDQNFNEPLFTGFSDDLRNVFEKDYVASKPHLAVSDETLPEPASVSPTREAEVEINPVSPIPDSTNPDSTVQLSPAQQTEDVLDSAGPRPAHAESVATEAQSPRTFDNDDMGIEHLRDGGFPVYMPSPPPRSSPFRTDDFTTQSGNWETESYRTEPSTSTVPEDLPGQRNLGLSPVSERTDEELYFLEVGGNSPVGTPASQDSAALTGRARALAQYLKQRSSSSPTTSSHPSGDLSLSEILAGKTRKLAARMFFETLVLKSRGLIDMQQDRPYGDIALKLMPALFSKVQT</sequence>
<feature type="chain" id="PRO_0000097877" description="Sister chromatid cohesion 1 protein 3">
    <location>
        <begin position="1"/>
        <end position="693"/>
    </location>
</feature>
<feature type="region of interest" description="Disordered" evidence="2">
    <location>
        <begin position="167"/>
        <end position="250"/>
    </location>
</feature>
<feature type="region of interest" description="Disordered" evidence="2">
    <location>
        <begin position="262"/>
        <end position="361"/>
    </location>
</feature>
<feature type="region of interest" description="Disordered" evidence="2">
    <location>
        <begin position="460"/>
        <end position="511"/>
    </location>
</feature>
<feature type="region of interest" description="Disordered" evidence="2">
    <location>
        <begin position="545"/>
        <end position="573"/>
    </location>
</feature>
<feature type="compositionally biased region" description="Basic and acidic residues" evidence="2">
    <location>
        <begin position="178"/>
        <end position="201"/>
    </location>
</feature>
<feature type="compositionally biased region" description="Basic and acidic residues" evidence="2">
    <location>
        <begin position="232"/>
        <end position="243"/>
    </location>
</feature>
<feature type="compositionally biased region" description="Polar residues" evidence="2">
    <location>
        <begin position="264"/>
        <end position="277"/>
    </location>
</feature>
<feature type="compositionally biased region" description="Basic and acidic residues" evidence="2">
    <location>
        <begin position="278"/>
        <end position="295"/>
    </location>
</feature>
<feature type="compositionally biased region" description="Low complexity" evidence="2">
    <location>
        <begin position="316"/>
        <end position="325"/>
    </location>
</feature>
<feature type="compositionally biased region" description="Polar residues" evidence="2">
    <location>
        <begin position="465"/>
        <end position="483"/>
    </location>
</feature>
<feature type="compositionally biased region" description="Polar residues" evidence="2">
    <location>
        <begin position="545"/>
        <end position="564"/>
    </location>
</feature>
<feature type="splice variant" id="VSP_007494" description="In isoform 2." evidence="3">
    <original>VHPSP</original>
    <variation>GELAT</variation>
    <location>
        <begin position="334"/>
        <end position="338"/>
    </location>
</feature>
<feature type="splice variant" id="VSP_007495" description="In isoform 2." evidence="3">
    <location>
        <begin position="339"/>
        <end position="693"/>
    </location>
</feature>
<feature type="splice variant" id="VSP_007496" description="In isoform 3." evidence="3">
    <original>L</original>
    <variation>LVSDSLYICFSLYLCSASSLDELFLNLQ</variation>
    <location>
        <position position="660"/>
    </location>
</feature>
<feature type="sequence conflict" description="In Ref. 1; AAG44843." evidence="3" ref="1">
    <original>S</original>
    <variation>R</variation>
    <location>
        <position position="179"/>
    </location>
</feature>
<feature type="sequence conflict" description="In Ref. 1; AAG44843." evidence="3" ref="1">
    <location>
        <position position="346"/>
    </location>
</feature>
<feature type="sequence conflict" description="In Ref. 1; AAG44843." evidence="3" ref="1">
    <original>Q</original>
    <variation>K</variation>
    <location>
        <position position="481"/>
    </location>
</feature>
<accession>Q9FQ19</accession>
<accession>Q9M1B3</accession>
<reference key="1">
    <citation type="journal article" date="2001" name="Gene">
        <title>Cloning and characterization of two Arabidopsis genes that belong to the RAD21/REC8 family of chromosome cohesin proteins.</title>
        <authorList>
            <person name="Dong F."/>
            <person name="Cai X."/>
            <person name="Makaroff C.A."/>
        </authorList>
    </citation>
    <scope>NUCLEOTIDE SEQUENCE [MRNA]</scope>
    <scope>ALTERNATIVE SPLICING</scope>
    <source>
        <strain>cv. Wassilewskija</strain>
    </source>
</reference>
<reference key="2">
    <citation type="submission" date="2001-07" db="EMBL/GenBank/DDBJ databases">
        <title>Functional analysis of the three Arabidopsis RAD21 homologs.</title>
        <authorList>
            <person name="Costa-Nunes J.A."/>
            <person name="Bhatt A.M."/>
            <person name="Dickinson H.G."/>
        </authorList>
    </citation>
    <scope>NUCLEOTIDE SEQUENCE</scope>
    <source>
        <strain>cv. Columbia</strain>
    </source>
</reference>
<reference key="3">
    <citation type="journal article" date="2000" name="Nature">
        <title>Sequence and analysis of chromosome 3 of the plant Arabidopsis thaliana.</title>
        <authorList>
            <person name="Salanoubat M."/>
            <person name="Lemcke K."/>
            <person name="Rieger M."/>
            <person name="Ansorge W."/>
            <person name="Unseld M."/>
            <person name="Fartmann B."/>
            <person name="Valle G."/>
            <person name="Bloecker H."/>
            <person name="Perez-Alonso M."/>
            <person name="Obermaier B."/>
            <person name="Delseny M."/>
            <person name="Boutry M."/>
            <person name="Grivell L.A."/>
            <person name="Mache R."/>
            <person name="Puigdomenech P."/>
            <person name="De Simone V."/>
            <person name="Choisne N."/>
            <person name="Artiguenave F."/>
            <person name="Robert C."/>
            <person name="Brottier P."/>
            <person name="Wincker P."/>
            <person name="Cattolico L."/>
            <person name="Weissenbach J."/>
            <person name="Saurin W."/>
            <person name="Quetier F."/>
            <person name="Schaefer M."/>
            <person name="Mueller-Auer S."/>
            <person name="Gabel C."/>
            <person name="Fuchs M."/>
            <person name="Benes V."/>
            <person name="Wurmbach E."/>
            <person name="Drzonek H."/>
            <person name="Erfle H."/>
            <person name="Jordan N."/>
            <person name="Bangert S."/>
            <person name="Wiedelmann R."/>
            <person name="Kranz H."/>
            <person name="Voss H."/>
            <person name="Holland R."/>
            <person name="Brandt P."/>
            <person name="Nyakatura G."/>
            <person name="Vezzi A."/>
            <person name="D'Angelo M."/>
            <person name="Pallavicini A."/>
            <person name="Toppo S."/>
            <person name="Simionati B."/>
            <person name="Conrad A."/>
            <person name="Hornischer K."/>
            <person name="Kauer G."/>
            <person name="Loehnert T.-H."/>
            <person name="Nordsiek G."/>
            <person name="Reichelt J."/>
            <person name="Scharfe M."/>
            <person name="Schoen O."/>
            <person name="Bargues M."/>
            <person name="Terol J."/>
            <person name="Climent J."/>
            <person name="Navarro P."/>
            <person name="Collado C."/>
            <person name="Perez-Perez A."/>
            <person name="Ottenwaelder B."/>
            <person name="Duchemin D."/>
            <person name="Cooke R."/>
            <person name="Laudie M."/>
            <person name="Berger-Llauro C."/>
            <person name="Purnelle B."/>
            <person name="Masuy D."/>
            <person name="de Haan M."/>
            <person name="Maarse A.C."/>
            <person name="Alcaraz J.-P."/>
            <person name="Cottet A."/>
            <person name="Casacuberta E."/>
            <person name="Monfort A."/>
            <person name="Argiriou A."/>
            <person name="Flores M."/>
            <person name="Liguori R."/>
            <person name="Vitale D."/>
            <person name="Mannhaupt G."/>
            <person name="Haase D."/>
            <person name="Schoof H."/>
            <person name="Rudd S."/>
            <person name="Zaccaria P."/>
            <person name="Mewes H.-W."/>
            <person name="Mayer K.F.X."/>
            <person name="Kaul S."/>
            <person name="Town C.D."/>
            <person name="Koo H.L."/>
            <person name="Tallon L.J."/>
            <person name="Jenkins J."/>
            <person name="Rooney T."/>
            <person name="Rizzo M."/>
            <person name="Walts A."/>
            <person name="Utterback T."/>
            <person name="Fujii C.Y."/>
            <person name="Shea T.P."/>
            <person name="Creasy T.H."/>
            <person name="Haas B."/>
            <person name="Maiti R."/>
            <person name="Wu D."/>
            <person name="Peterson J."/>
            <person name="Van Aken S."/>
            <person name="Pai G."/>
            <person name="Militscher J."/>
            <person name="Sellers P."/>
            <person name="Gill J.E."/>
            <person name="Feldblyum T.V."/>
            <person name="Preuss D."/>
            <person name="Lin X."/>
            <person name="Nierman W.C."/>
            <person name="Salzberg S.L."/>
            <person name="White O."/>
            <person name="Venter J.C."/>
            <person name="Fraser C.M."/>
            <person name="Kaneko T."/>
            <person name="Nakamura Y."/>
            <person name="Sato S."/>
            <person name="Kato T."/>
            <person name="Asamizu E."/>
            <person name="Sasamoto S."/>
            <person name="Kimura T."/>
            <person name="Idesawa K."/>
            <person name="Kawashima K."/>
            <person name="Kishida Y."/>
            <person name="Kiyokawa C."/>
            <person name="Kohara M."/>
            <person name="Matsumoto M."/>
            <person name="Matsuno A."/>
            <person name="Muraki A."/>
            <person name="Nakayama S."/>
            <person name="Nakazaki N."/>
            <person name="Shinpo S."/>
            <person name="Takeuchi C."/>
            <person name="Wada T."/>
            <person name="Watanabe A."/>
            <person name="Yamada M."/>
            <person name="Yasuda M."/>
            <person name="Tabata S."/>
        </authorList>
    </citation>
    <scope>NUCLEOTIDE SEQUENCE [LARGE SCALE GENOMIC DNA]</scope>
    <source>
        <strain>cv. Columbia</strain>
    </source>
</reference>
<reference key="4">
    <citation type="journal article" date="2017" name="Plant J.">
        <title>Araport11: a complete reannotation of the Arabidopsis thaliana reference genome.</title>
        <authorList>
            <person name="Cheng C.Y."/>
            <person name="Krishnakumar V."/>
            <person name="Chan A.P."/>
            <person name="Thibaud-Nissen F."/>
            <person name="Schobel S."/>
            <person name="Town C.D."/>
        </authorList>
    </citation>
    <scope>GENOME REANNOTATION</scope>
    <source>
        <strain>cv. Columbia</strain>
    </source>
</reference>
<dbReference type="EMBL" id="AF281155">
    <property type="protein sequence ID" value="AAG44843.1"/>
    <property type="molecule type" value="mRNA"/>
</dbReference>
<dbReference type="EMBL" id="AF400128">
    <property type="protein sequence ID" value="AAL62059.1"/>
    <property type="molecule type" value="mRNA"/>
</dbReference>
<dbReference type="EMBL" id="AL138659">
    <property type="protein sequence ID" value="CAB75452.1"/>
    <property type="molecule type" value="Genomic_DNA"/>
</dbReference>
<dbReference type="EMBL" id="CP002686">
    <property type="protein sequence ID" value="AEE79939.1"/>
    <property type="molecule type" value="Genomic_DNA"/>
</dbReference>
<dbReference type="PIR" id="T49296">
    <property type="entry name" value="T49296"/>
</dbReference>
<dbReference type="RefSeq" id="NP_191514.1">
    <molecule id="Q9FQ19-1"/>
    <property type="nucleotide sequence ID" value="NM_115817.3"/>
</dbReference>
<dbReference type="SMR" id="Q9FQ19"/>
<dbReference type="FunCoup" id="Q9FQ19">
    <property type="interactions" value="102"/>
</dbReference>
<dbReference type="STRING" id="3702.Q9FQ19"/>
<dbReference type="GlyGen" id="Q9FQ19">
    <property type="glycosylation" value="1 site"/>
</dbReference>
<dbReference type="iPTMnet" id="Q9FQ19"/>
<dbReference type="PaxDb" id="3702-AT3G59550.1"/>
<dbReference type="ProteomicsDB" id="232842">
    <molecule id="Q9FQ19-1"/>
</dbReference>
<dbReference type="EnsemblPlants" id="AT3G59550.1">
    <molecule id="Q9FQ19-1"/>
    <property type="protein sequence ID" value="AT3G59550.1"/>
    <property type="gene ID" value="AT3G59550"/>
</dbReference>
<dbReference type="GeneID" id="825124"/>
<dbReference type="Gramene" id="AT3G59550.1">
    <molecule id="Q9FQ19-1"/>
    <property type="protein sequence ID" value="AT3G59550.1"/>
    <property type="gene ID" value="AT3G59550"/>
</dbReference>
<dbReference type="KEGG" id="ath:AT3G59550"/>
<dbReference type="Araport" id="AT3G59550"/>
<dbReference type="TAIR" id="AT3G59550">
    <property type="gene designation" value="SYN3"/>
</dbReference>
<dbReference type="eggNOG" id="KOG1213">
    <property type="taxonomic scope" value="Eukaryota"/>
</dbReference>
<dbReference type="HOGENOM" id="CLU_018792_0_0_1"/>
<dbReference type="InParanoid" id="Q9FQ19"/>
<dbReference type="OMA" id="QQEEPYG"/>
<dbReference type="OrthoDB" id="10071381at2759"/>
<dbReference type="PhylomeDB" id="Q9FQ19"/>
<dbReference type="PRO" id="PR:Q9FQ19"/>
<dbReference type="Proteomes" id="UP000006548">
    <property type="component" value="Chromosome 3"/>
</dbReference>
<dbReference type="ExpressionAtlas" id="Q9FQ19">
    <property type="expression patterns" value="baseline and differential"/>
</dbReference>
<dbReference type="GO" id="GO:0008278">
    <property type="term" value="C:cohesin complex"/>
    <property type="evidence" value="ECO:0007669"/>
    <property type="project" value="InterPro"/>
</dbReference>
<dbReference type="GO" id="GO:0005730">
    <property type="term" value="C:nucleolus"/>
    <property type="evidence" value="ECO:0000314"/>
    <property type="project" value="TAIR"/>
</dbReference>
<dbReference type="GO" id="GO:0005634">
    <property type="term" value="C:nucleus"/>
    <property type="evidence" value="ECO:0000250"/>
    <property type="project" value="TAIR"/>
</dbReference>
<dbReference type="GO" id="GO:0051301">
    <property type="term" value="P:cell division"/>
    <property type="evidence" value="ECO:0007669"/>
    <property type="project" value="UniProtKB-KW"/>
</dbReference>
<dbReference type="GO" id="GO:0007059">
    <property type="term" value="P:chromosome segregation"/>
    <property type="evidence" value="ECO:0007669"/>
    <property type="project" value="UniProtKB-KW"/>
</dbReference>
<dbReference type="GO" id="GO:0009561">
    <property type="term" value="P:megagametogenesis"/>
    <property type="evidence" value="ECO:0000315"/>
    <property type="project" value="TAIR"/>
</dbReference>
<dbReference type="GO" id="GO:0000278">
    <property type="term" value="P:mitotic cell cycle"/>
    <property type="evidence" value="ECO:0000270"/>
    <property type="project" value="TAIR"/>
</dbReference>
<dbReference type="GO" id="GO:0009555">
    <property type="term" value="P:pollen development"/>
    <property type="evidence" value="ECO:0000315"/>
    <property type="project" value="TAIR"/>
</dbReference>
<dbReference type="GO" id="GO:0007062">
    <property type="term" value="P:sister chromatid cohesion"/>
    <property type="evidence" value="ECO:0007669"/>
    <property type="project" value="InterPro"/>
</dbReference>
<dbReference type="CDD" id="cd21793">
    <property type="entry name" value="Rad21_Rec8_M_AtSYN1-like"/>
    <property type="match status" value="1"/>
</dbReference>
<dbReference type="FunFam" id="1.10.10.580:FF:000002">
    <property type="entry name" value="Sister chromatid cohesion 1 protein 4"/>
    <property type="match status" value="1"/>
</dbReference>
<dbReference type="Gene3D" id="1.10.10.580">
    <property type="entry name" value="Structural maintenance of chromosome 1. Chain E"/>
    <property type="match status" value="1"/>
</dbReference>
<dbReference type="InterPro" id="IPR039781">
    <property type="entry name" value="Rad21/Rec8-like"/>
</dbReference>
<dbReference type="InterPro" id="IPR006909">
    <property type="entry name" value="Rad21/Rec8_C_eu"/>
</dbReference>
<dbReference type="InterPro" id="IPR006910">
    <property type="entry name" value="Rad21_Rec8_N"/>
</dbReference>
<dbReference type="InterPro" id="IPR023093">
    <property type="entry name" value="ScpA-like_C"/>
</dbReference>
<dbReference type="InterPro" id="IPR036390">
    <property type="entry name" value="WH_DNA-bd_sf"/>
</dbReference>
<dbReference type="PANTHER" id="PTHR12585">
    <property type="entry name" value="SCC1 / RAD21 FAMILY MEMBER"/>
    <property type="match status" value="1"/>
</dbReference>
<dbReference type="PANTHER" id="PTHR12585:SF55">
    <property type="entry name" value="SISTER CHROMATID COHESION 1 PROTEIN 3"/>
    <property type="match status" value="1"/>
</dbReference>
<dbReference type="Pfam" id="PF04824">
    <property type="entry name" value="Rad21_Rec8"/>
    <property type="match status" value="1"/>
</dbReference>
<dbReference type="Pfam" id="PF04825">
    <property type="entry name" value="Rad21_Rec8_N"/>
    <property type="match status" value="1"/>
</dbReference>
<dbReference type="SUPFAM" id="SSF46785">
    <property type="entry name" value="Winged helix' DNA-binding domain"/>
    <property type="match status" value="1"/>
</dbReference>
<gene>
    <name type="primary">SYN3</name>
    <name type="ordered locus">At3g59550</name>
    <name type="ORF">T16L24.100</name>
</gene>
<comment type="function">
    <text>May be involved in sister chromatid cohesion during mitosis.</text>
</comment>
<comment type="subunit">
    <text evidence="1">Component of the cohesin complex.</text>
</comment>
<comment type="subcellular location">
    <subcellularLocation>
        <location>Nucleus</location>
    </subcellularLocation>
</comment>
<comment type="alternative products">
    <event type="alternative splicing"/>
    <isoform>
        <id>Q9FQ19-1</id>
        <name>1</name>
        <sequence type="displayed"/>
    </isoform>
    <isoform>
        <id>Q9FQ19-2</id>
        <name>2</name>
        <sequence type="described" ref="VSP_007494 VSP_007495"/>
    </isoform>
    <isoform>
        <id>Q9FQ19-3</id>
        <name>3</name>
        <sequence type="described" ref="VSP_007496"/>
    </isoform>
</comment>
<comment type="tissue specificity">
    <text>Low expression in shoots, buds, siliques, leaves and roots. Found in, but not limited to, actively dividing cells: in procambium, protoderm and ground meristem in roots, and in shoot and floral meristems.</text>
</comment>
<comment type="miscellaneous">
    <molecule>Isoform 2</molecule>
    <text evidence="3">Derived from PCR data. Produced by intron retention.</text>
</comment>
<comment type="miscellaneous">
    <molecule>Isoform 3</molecule>
    <text evidence="3">Derived from PCR data. Produced by intron retention.</text>
</comment>
<comment type="similarity">
    <text evidence="3">Belongs to the rad21 family.</text>
</comment>
<name>SCC13_ARATH</name>